<dbReference type="EC" id="2.3.2.23"/>
<dbReference type="EMBL" id="AF061604">
    <property type="protein sequence ID" value="AAC16238.1"/>
    <property type="molecule type" value="Genomic_DNA"/>
</dbReference>
<dbReference type="PDB" id="5NKZ">
    <property type="method" value="X-ray"/>
    <property type="resolution" value="2.85 A"/>
    <property type="chains" value="A/B=3-188"/>
</dbReference>
<dbReference type="PDB" id="5NL8">
    <property type="method" value="X-ray"/>
    <property type="resolution" value="2.20 A"/>
    <property type="chains" value="A=3-188"/>
</dbReference>
<dbReference type="PDBsum" id="5NKZ"/>
<dbReference type="PDBsum" id="5NL8"/>
<dbReference type="SMR" id="O60015"/>
<dbReference type="UniPathway" id="UPA00143"/>
<dbReference type="GO" id="GO:0005524">
    <property type="term" value="F:ATP binding"/>
    <property type="evidence" value="ECO:0007669"/>
    <property type="project" value="UniProtKB-KW"/>
</dbReference>
<dbReference type="GO" id="GO:0061631">
    <property type="term" value="F:ubiquitin conjugating enzyme activity"/>
    <property type="evidence" value="ECO:0007669"/>
    <property type="project" value="UniProtKB-EC"/>
</dbReference>
<dbReference type="GO" id="GO:0004842">
    <property type="term" value="F:ubiquitin-protein transferase activity"/>
    <property type="evidence" value="ECO:0000250"/>
    <property type="project" value="UniProtKB"/>
</dbReference>
<dbReference type="GO" id="GO:0007031">
    <property type="term" value="P:peroxisome organization"/>
    <property type="evidence" value="ECO:0007669"/>
    <property type="project" value="UniProtKB-KW"/>
</dbReference>
<dbReference type="GO" id="GO:0016567">
    <property type="term" value="P:protein ubiquitination"/>
    <property type="evidence" value="ECO:0000250"/>
    <property type="project" value="UniProtKB"/>
</dbReference>
<dbReference type="CDD" id="cd23812">
    <property type="entry name" value="UBCc_ScPEX4-like"/>
    <property type="match status" value="1"/>
</dbReference>
<dbReference type="FunFam" id="3.10.110.10:FF:000096">
    <property type="entry name" value="Ubiquitin-conjugating enzyme E2-21 kDa"/>
    <property type="match status" value="1"/>
</dbReference>
<dbReference type="Gene3D" id="3.10.110.10">
    <property type="entry name" value="Ubiquitin Conjugating Enzyme"/>
    <property type="match status" value="1"/>
</dbReference>
<dbReference type="InterPro" id="IPR050113">
    <property type="entry name" value="Ub_conjugating_enzyme"/>
</dbReference>
<dbReference type="InterPro" id="IPR000608">
    <property type="entry name" value="UBQ-conjugat_E2_core"/>
</dbReference>
<dbReference type="InterPro" id="IPR023313">
    <property type="entry name" value="UBQ-conjugating_AS"/>
</dbReference>
<dbReference type="InterPro" id="IPR016135">
    <property type="entry name" value="UBQ-conjugating_enzyme/RWD"/>
</dbReference>
<dbReference type="PANTHER" id="PTHR24067">
    <property type="entry name" value="UBIQUITIN-CONJUGATING ENZYME E2"/>
    <property type="match status" value="1"/>
</dbReference>
<dbReference type="Pfam" id="PF00179">
    <property type="entry name" value="UQ_con"/>
    <property type="match status" value="1"/>
</dbReference>
<dbReference type="SMART" id="SM00212">
    <property type="entry name" value="UBCc"/>
    <property type="match status" value="1"/>
</dbReference>
<dbReference type="SUPFAM" id="SSF54495">
    <property type="entry name" value="UBC-like"/>
    <property type="match status" value="1"/>
</dbReference>
<dbReference type="PROSITE" id="PS00183">
    <property type="entry name" value="UBC_1"/>
    <property type="match status" value="1"/>
</dbReference>
<dbReference type="PROSITE" id="PS50127">
    <property type="entry name" value="UBC_2"/>
    <property type="match status" value="1"/>
</dbReference>
<gene>
    <name type="primary">PEX4</name>
</gene>
<feature type="chain" id="PRO_0000082557" description="Ubiquitin-conjugating enzyme E2-21 kDa">
    <location>
        <begin position="1"/>
        <end position="188"/>
    </location>
</feature>
<feature type="domain" description="UBC core" evidence="1">
    <location>
        <begin position="3"/>
        <end position="182"/>
    </location>
</feature>
<feature type="active site" description="Glycyl thioester intermediate" evidence="1 2">
    <location>
        <position position="119"/>
    </location>
</feature>
<feature type="helix" evidence="4">
    <location>
        <begin position="4"/>
        <end position="19"/>
    </location>
</feature>
<feature type="strand" evidence="4">
    <location>
        <begin position="20"/>
        <end position="22"/>
    </location>
</feature>
<feature type="helix" evidence="4">
    <location>
        <begin position="25"/>
        <end position="28"/>
    </location>
</feature>
<feature type="strand" evidence="4">
    <location>
        <begin position="31"/>
        <end position="40"/>
    </location>
</feature>
<feature type="strand" evidence="4">
    <location>
        <begin position="43"/>
        <end position="49"/>
    </location>
</feature>
<feature type="strand" evidence="3">
    <location>
        <begin position="52"/>
        <end position="54"/>
    </location>
</feature>
<feature type="turn" evidence="3">
    <location>
        <begin position="55"/>
        <end position="58"/>
    </location>
</feature>
<feature type="strand" evidence="4">
    <location>
        <begin position="60"/>
        <end position="66"/>
    </location>
</feature>
<feature type="turn" evidence="4">
    <location>
        <begin position="69"/>
        <end position="72"/>
    </location>
</feature>
<feature type="strand" evidence="4">
    <location>
        <begin position="77"/>
        <end position="80"/>
    </location>
</feature>
<feature type="helix" evidence="4">
    <location>
        <begin position="85"/>
        <end position="92"/>
    </location>
</feature>
<feature type="turn" evidence="4">
    <location>
        <begin position="113"/>
        <end position="115"/>
    </location>
</feature>
<feature type="helix" evidence="4">
    <location>
        <begin position="121"/>
        <end position="124"/>
    </location>
</feature>
<feature type="helix" evidence="4">
    <location>
        <begin position="133"/>
        <end position="145"/>
    </location>
</feature>
<feature type="helix" evidence="4">
    <location>
        <begin position="155"/>
        <end position="162"/>
    </location>
</feature>
<feature type="helix" evidence="4">
    <location>
        <begin position="166"/>
        <end position="179"/>
    </location>
</feature>
<feature type="strand" evidence="4">
    <location>
        <begin position="180"/>
        <end position="182"/>
    </location>
</feature>
<organism>
    <name type="scientific">Pichia angusta</name>
    <name type="common">Yeast</name>
    <name type="synonym">Hansenula polymorpha</name>
    <dbReference type="NCBI Taxonomy" id="870730"/>
    <lineage>
        <taxon>Eukaryota</taxon>
        <taxon>Fungi</taxon>
        <taxon>Dikarya</taxon>
        <taxon>Ascomycota</taxon>
        <taxon>Saccharomycotina</taxon>
        <taxon>Pichiomycetes</taxon>
        <taxon>Pichiales</taxon>
        <taxon>Pichiaceae</taxon>
        <taxon>Ogataea</taxon>
    </lineage>
</organism>
<sequence length="188" mass="21531">MSSTEKRLLKEYRAVKKELTEKRSPIHDTGIVDLHPLEDGLFRWSAVIRGPDQSPFEDALWKLEIDIPTNYPLDPPKIKFVVFGEEKIRQLQRKTSSGARKVCYKMPHPNVNFKTGEICLDILQQKWSPAWTLQSALVAIVVLLANPEPLSPLNIDMANLLKCDDTTAYKDLVHYYIAKYSAYESNDV</sequence>
<keyword id="KW-0002">3D-structure</keyword>
<keyword id="KW-0067">ATP-binding</keyword>
<keyword id="KW-0547">Nucleotide-binding</keyword>
<keyword id="KW-0962">Peroxisome biogenesis</keyword>
<keyword id="KW-0808">Transferase</keyword>
<keyword id="KW-0833">Ubl conjugation pathway</keyword>
<accession>O60015</accession>
<protein>
    <recommendedName>
        <fullName>Ubiquitin-conjugating enzyme E2-21 kDa</fullName>
        <ecNumber>2.3.2.23</ecNumber>
    </recommendedName>
    <alternativeName>
        <fullName>E2 ubiquitin-conjugating enzyme PEX4</fullName>
    </alternativeName>
    <alternativeName>
        <fullName>Peroxin-4</fullName>
    </alternativeName>
    <alternativeName>
        <fullName>Ubiquitin carrier protein</fullName>
    </alternativeName>
    <alternativeName>
        <fullName>Ubiquitin-protein ligase</fullName>
    </alternativeName>
</protein>
<comment type="function">
    <text evidence="1">Catalyzes the covalent attachment of ubiquitin to other proteins. Essential for peroxisome biogenesis. Required for UBC4-independent ubiquitination of PEX5.</text>
</comment>
<comment type="catalytic activity">
    <reaction evidence="1 2">
        <text>S-ubiquitinyl-[E1 ubiquitin-activating enzyme]-L-cysteine + [E2 ubiquitin-conjugating enzyme]-L-cysteine = [E1 ubiquitin-activating enzyme]-L-cysteine + S-ubiquitinyl-[E2 ubiquitin-conjugating enzyme]-L-cysteine.</text>
        <dbReference type="EC" id="2.3.2.23"/>
    </reaction>
</comment>
<comment type="pathway">
    <text evidence="1">Protein modification; protein ubiquitination.</text>
</comment>
<comment type="similarity">
    <text evidence="1">Belongs to the ubiquitin-conjugating enzyme family.</text>
</comment>
<name>UBCX_PICAN</name>
<reference key="1">
    <citation type="journal article" date="1998" name="EMBO J.">
        <title>The ubiquitin-conjugating enzyme Pex4p of Hansenula polymorpha is required for efficient functioning of the PTS1 import machinery.</title>
        <authorList>
            <person name="van der Klei I.J."/>
            <person name="Hilbrands R.E."/>
            <person name="Kiel J.A.K.W."/>
            <person name="Rasmussen S.W."/>
            <person name="Cregg J.M."/>
            <person name="Veenhuis M."/>
        </authorList>
    </citation>
    <scope>NUCLEOTIDE SEQUENCE [GENOMIC DNA]</scope>
    <source>
        <strain>ATCC 34438 / CBS 4732 / DSM 70277 / JCM 3621 / NBRC 1476 / NRRL Y-5445</strain>
    </source>
</reference>
<evidence type="ECO:0000255" key="1">
    <source>
        <dbReference type="PROSITE-ProRule" id="PRU00388"/>
    </source>
</evidence>
<evidence type="ECO:0000255" key="2">
    <source>
        <dbReference type="PROSITE-ProRule" id="PRU10133"/>
    </source>
</evidence>
<evidence type="ECO:0007829" key="3">
    <source>
        <dbReference type="PDB" id="5NKZ"/>
    </source>
</evidence>
<evidence type="ECO:0007829" key="4">
    <source>
        <dbReference type="PDB" id="5NL8"/>
    </source>
</evidence>
<proteinExistence type="evidence at protein level"/>